<sequence>MGRQKELVTRCGEMLHIRYRLLRQALAECLGTLILVMFGCGSVAQVVLSRGTHGGFLTINLAFGFAVTLGILVAGQVSGAHLNPAVTFAMCFLAREPWIKLPVYTLAQTLGAFLGAGIIFGLYYDAIWAFANNQLIVSGPNGTAGIFATYPSGHLDMVNGFFDQFIGTASLIVCVLAIVDPNNNPVPRGLEAFTVGLVVLVIGTSMGFNSGYAVNPARDFGPRLFTAIAGWGSEVFTTGRHWWWVPIASPLLGSIAGVFVYQLMIGCHLEPPPPSTDEENVKLSQVKHKE</sequence>
<proteinExistence type="evidence at transcript level"/>
<gene>
    <name evidence="7" type="primary">AQP3</name>
</gene>
<evidence type="ECO:0000250" key="1">
    <source>
        <dbReference type="UniProtKB" id="O14520"/>
    </source>
</evidence>
<evidence type="ECO:0000250" key="2">
    <source>
        <dbReference type="UniProtKB" id="P47862"/>
    </source>
</evidence>
<evidence type="ECO:0000250" key="3">
    <source>
        <dbReference type="UniProtKB" id="Q8R2N1"/>
    </source>
</evidence>
<evidence type="ECO:0000250" key="4">
    <source>
        <dbReference type="UniProtKB" id="Q92482"/>
    </source>
</evidence>
<evidence type="ECO:0000255" key="5"/>
<evidence type="ECO:0000269" key="6">
    <source>
    </source>
</evidence>
<evidence type="ECO:0000303" key="7">
    <source>
    </source>
</evidence>
<evidence type="ECO:0000305" key="8"/>
<evidence type="ECO:0000305" key="9">
    <source ref="2"/>
</evidence>
<accession>A9Y006</accession>
<accession>A8IF63</accession>
<name>AQP3_PIG</name>
<keyword id="KW-1003">Cell membrane</keyword>
<keyword id="KW-0325">Glycoprotein</keyword>
<keyword id="KW-0472">Membrane</keyword>
<keyword id="KW-1185">Reference proteome</keyword>
<keyword id="KW-0677">Repeat</keyword>
<keyword id="KW-0812">Transmembrane</keyword>
<keyword id="KW-1133">Transmembrane helix</keyword>
<keyword id="KW-0813">Transport</keyword>
<reference key="1">
    <citation type="journal article" date="2008" name="Comp. Biochem. Physiol.">
        <title>Molecular characterization, chromosomal and expression patterns of three aquaglyceroporins (AQP3, 7, 9) from pig.</title>
        <authorList>
            <person name="Li X."/>
            <person name="Lei T."/>
            <person name="Xia T."/>
            <person name="Chen X."/>
            <person name="Feng S."/>
            <person name="Chen H."/>
            <person name="Chen Z."/>
            <person name="Peng Y."/>
            <person name="Yang Z."/>
        </authorList>
    </citation>
    <scope>NUCLEOTIDE SEQUENCE [MRNA]</scope>
    <scope>TISSUE SPECIFICITY</scope>
</reference>
<reference key="2">
    <citation type="submission" date="2007-09" db="EMBL/GenBank/DDBJ databases">
        <title>Molecular cloning and expression of porcine aquaporin 3.</title>
        <authorList>
            <person name="Zhang Z.-Q."/>
            <person name="Wang Y.-L."/>
            <person name="Yang G.-Y."/>
            <person name="Wang W.-J."/>
            <person name="Tai Y.-L."/>
            <person name="Han L.-Q."/>
        </authorList>
    </citation>
    <scope>NUCLEOTIDE SEQUENCE [MRNA]</scope>
</reference>
<feature type="chain" id="PRO_0000394026" description="Aquaporin-3">
    <location>
        <begin position="1"/>
        <end position="290"/>
    </location>
</feature>
<feature type="topological domain" description="Cytoplasmic" evidence="1">
    <location>
        <begin position="1"/>
        <end position="24"/>
    </location>
</feature>
<feature type="transmembrane region" description="Helical; Name=1" evidence="1">
    <location>
        <begin position="25"/>
        <end position="42"/>
    </location>
</feature>
<feature type="topological domain" description="Extracellular" evidence="1">
    <location>
        <begin position="43"/>
        <end position="56"/>
    </location>
</feature>
<feature type="transmembrane region" description="Helical; Name=2" evidence="1">
    <location>
        <begin position="57"/>
        <end position="74"/>
    </location>
</feature>
<feature type="topological domain" description="Cytoplasmic" evidence="1">
    <location>
        <begin position="75"/>
        <end position="78"/>
    </location>
</feature>
<feature type="intramembrane region" description="Discontinuously helical" evidence="1">
    <location>
        <begin position="79"/>
        <end position="92"/>
    </location>
</feature>
<feature type="topological domain" description="Cytoplasmic" evidence="1">
    <location>
        <begin position="93"/>
        <end position="100"/>
    </location>
</feature>
<feature type="transmembrane region" description="Helical; Name=3" evidence="1">
    <location>
        <begin position="101"/>
        <end position="121"/>
    </location>
</feature>
<feature type="topological domain" description="Extracellular" evidence="1">
    <location>
        <begin position="122"/>
        <end position="159"/>
    </location>
</feature>
<feature type="transmembrane region" description="Helical; Name=4" evidence="1">
    <location>
        <begin position="160"/>
        <end position="177"/>
    </location>
</feature>
<feature type="topological domain" description="Cytoplasmic" evidence="1">
    <location>
        <begin position="178"/>
        <end position="189"/>
    </location>
</feature>
<feature type="transmembrane region" description="Helical; Name=5" evidence="1">
    <location>
        <begin position="190"/>
        <end position="206"/>
    </location>
</feature>
<feature type="topological domain" description="Extracellular" evidence="1">
    <location>
        <begin position="207"/>
        <end position="210"/>
    </location>
</feature>
<feature type="intramembrane region" description="Discontinuously helical" evidence="1">
    <location>
        <begin position="211"/>
        <end position="224"/>
    </location>
</feature>
<feature type="topological domain" description="Extracellular" evidence="1">
    <location>
        <begin position="225"/>
        <end position="242"/>
    </location>
</feature>
<feature type="transmembrane region" description="Helical; Name=6" evidence="1">
    <location>
        <begin position="243"/>
        <end position="264"/>
    </location>
</feature>
<feature type="topological domain" description="Cytoplasmic" evidence="1">
    <location>
        <begin position="265"/>
        <end position="290"/>
    </location>
</feature>
<feature type="short sequence motif" description="NPA 1" evidence="1">
    <location>
        <begin position="83"/>
        <end position="85"/>
    </location>
</feature>
<feature type="short sequence motif" description="NPA 2" evidence="1">
    <location>
        <begin position="215"/>
        <end position="217"/>
    </location>
</feature>
<feature type="site" description="Selectivity filter" evidence="1">
    <location>
        <position position="63"/>
    </location>
</feature>
<feature type="site" description="Selectivity filter" evidence="1">
    <location>
        <position position="212"/>
    </location>
</feature>
<feature type="site" description="Selectivity filter" evidence="1">
    <location>
        <position position="218"/>
    </location>
</feature>
<feature type="glycosylation site" description="N-linked (GlcNAc...) asparagine" evidence="5">
    <location>
        <position position="141"/>
    </location>
</feature>
<feature type="sequence conflict" description="In Ref. 2; ABW06862." evidence="8" ref="2">
    <original>A</original>
    <variation>V</variation>
    <location>
        <position position="248"/>
    </location>
</feature>
<protein>
    <recommendedName>
        <fullName evidence="9">Aquaporin-3</fullName>
    </recommendedName>
    <alternativeName>
        <fullName evidence="7">Aquaglyceroporin-3</fullName>
    </alternativeName>
</protein>
<organism>
    <name type="scientific">Sus scrofa</name>
    <name type="common">Pig</name>
    <dbReference type="NCBI Taxonomy" id="9823"/>
    <lineage>
        <taxon>Eukaryota</taxon>
        <taxon>Metazoa</taxon>
        <taxon>Chordata</taxon>
        <taxon>Craniata</taxon>
        <taxon>Vertebrata</taxon>
        <taxon>Euteleostomi</taxon>
        <taxon>Mammalia</taxon>
        <taxon>Eutheria</taxon>
        <taxon>Laurasiatheria</taxon>
        <taxon>Artiodactyla</taxon>
        <taxon>Suina</taxon>
        <taxon>Suidae</taxon>
        <taxon>Sus</taxon>
    </lineage>
</organism>
<dbReference type="EMBL" id="EU024115">
    <property type="protein sequence ID" value="ABW06528.1"/>
    <property type="molecule type" value="Genomic_DNA"/>
</dbReference>
<dbReference type="EMBL" id="EU161094">
    <property type="protein sequence ID" value="ABW06862.1"/>
    <property type="molecule type" value="mRNA"/>
</dbReference>
<dbReference type="RefSeq" id="NP_001103642.1">
    <property type="nucleotide sequence ID" value="NM_001110172.1"/>
</dbReference>
<dbReference type="SMR" id="A9Y006"/>
<dbReference type="FunCoup" id="A9Y006">
    <property type="interactions" value="119"/>
</dbReference>
<dbReference type="STRING" id="9823.ENSSSCP00000055253"/>
<dbReference type="GlyCosmos" id="A9Y006">
    <property type="glycosylation" value="1 site, No reported glycans"/>
</dbReference>
<dbReference type="GlyGen" id="A9Y006">
    <property type="glycosylation" value="1 site"/>
</dbReference>
<dbReference type="PaxDb" id="9823-ENSSSCP00000011724"/>
<dbReference type="PeptideAtlas" id="A9Y006"/>
<dbReference type="GeneID" id="100126235"/>
<dbReference type="KEGG" id="ssc:100126235"/>
<dbReference type="CTD" id="360"/>
<dbReference type="eggNOG" id="KOG0224">
    <property type="taxonomic scope" value="Eukaryota"/>
</dbReference>
<dbReference type="InParanoid" id="A9Y006"/>
<dbReference type="OrthoDB" id="3222at2759"/>
<dbReference type="Proteomes" id="UP000008227">
    <property type="component" value="Unplaced"/>
</dbReference>
<dbReference type="Proteomes" id="UP000314985">
    <property type="component" value="Unplaced"/>
</dbReference>
<dbReference type="Proteomes" id="UP000694570">
    <property type="component" value="Unplaced"/>
</dbReference>
<dbReference type="Proteomes" id="UP000694571">
    <property type="component" value="Unplaced"/>
</dbReference>
<dbReference type="Proteomes" id="UP000694720">
    <property type="component" value="Unplaced"/>
</dbReference>
<dbReference type="Proteomes" id="UP000694722">
    <property type="component" value="Unplaced"/>
</dbReference>
<dbReference type="Proteomes" id="UP000694723">
    <property type="component" value="Unplaced"/>
</dbReference>
<dbReference type="Proteomes" id="UP000694724">
    <property type="component" value="Unplaced"/>
</dbReference>
<dbReference type="Proteomes" id="UP000694725">
    <property type="component" value="Unplaced"/>
</dbReference>
<dbReference type="Proteomes" id="UP000694726">
    <property type="component" value="Unplaced"/>
</dbReference>
<dbReference type="Proteomes" id="UP000694727">
    <property type="component" value="Unplaced"/>
</dbReference>
<dbReference type="Proteomes" id="UP000694728">
    <property type="component" value="Unplaced"/>
</dbReference>
<dbReference type="GO" id="GO:0016323">
    <property type="term" value="C:basolateral plasma membrane"/>
    <property type="evidence" value="ECO:0000250"/>
    <property type="project" value="UniProtKB"/>
</dbReference>
<dbReference type="GO" id="GO:0005886">
    <property type="term" value="C:plasma membrane"/>
    <property type="evidence" value="ECO:0000318"/>
    <property type="project" value="GO_Central"/>
</dbReference>
<dbReference type="GO" id="GO:0015254">
    <property type="term" value="F:glycerol channel activity"/>
    <property type="evidence" value="ECO:0000250"/>
    <property type="project" value="UniProtKB"/>
</dbReference>
<dbReference type="GO" id="GO:0015166">
    <property type="term" value="F:polyol transmembrane transporter activity"/>
    <property type="evidence" value="ECO:0000250"/>
    <property type="project" value="UniProtKB"/>
</dbReference>
<dbReference type="GO" id="GO:0015250">
    <property type="term" value="F:water channel activity"/>
    <property type="evidence" value="ECO:0000250"/>
    <property type="project" value="UniProtKB"/>
</dbReference>
<dbReference type="GO" id="GO:0015793">
    <property type="term" value="P:glycerol transmembrane transport"/>
    <property type="evidence" value="ECO:0000250"/>
    <property type="project" value="UniProtKB"/>
</dbReference>
<dbReference type="GO" id="GO:0015791">
    <property type="term" value="P:polyol transmembrane transport"/>
    <property type="evidence" value="ECO:0000250"/>
    <property type="project" value="UniProtKB"/>
</dbReference>
<dbReference type="GO" id="GO:0006833">
    <property type="term" value="P:water transport"/>
    <property type="evidence" value="ECO:0000250"/>
    <property type="project" value="UniProtKB"/>
</dbReference>
<dbReference type="CDD" id="cd00333">
    <property type="entry name" value="MIP"/>
    <property type="match status" value="1"/>
</dbReference>
<dbReference type="FunFam" id="1.20.1080.10:FF:000005">
    <property type="entry name" value="Aquaporin 3"/>
    <property type="match status" value="1"/>
</dbReference>
<dbReference type="Gene3D" id="1.20.1080.10">
    <property type="entry name" value="Glycerol uptake facilitator protein"/>
    <property type="match status" value="1"/>
</dbReference>
<dbReference type="InterPro" id="IPR023271">
    <property type="entry name" value="Aquaporin-like"/>
</dbReference>
<dbReference type="InterPro" id="IPR023275">
    <property type="entry name" value="Aquaporin_3"/>
</dbReference>
<dbReference type="InterPro" id="IPR000425">
    <property type="entry name" value="MIP"/>
</dbReference>
<dbReference type="InterPro" id="IPR050363">
    <property type="entry name" value="MIP/Aquaporin"/>
</dbReference>
<dbReference type="InterPro" id="IPR022357">
    <property type="entry name" value="MIP_CS"/>
</dbReference>
<dbReference type="NCBIfam" id="TIGR00861">
    <property type="entry name" value="MIP"/>
    <property type="match status" value="1"/>
</dbReference>
<dbReference type="PANTHER" id="PTHR43829">
    <property type="entry name" value="AQUAPORIN OR AQUAGLYCEROPORIN RELATED"/>
    <property type="match status" value="1"/>
</dbReference>
<dbReference type="PANTHER" id="PTHR43829:SF7">
    <property type="entry name" value="AQUAPORIN-3"/>
    <property type="match status" value="1"/>
</dbReference>
<dbReference type="Pfam" id="PF00230">
    <property type="entry name" value="MIP"/>
    <property type="match status" value="1"/>
</dbReference>
<dbReference type="PRINTS" id="PR02015">
    <property type="entry name" value="AQUAPORIN3"/>
</dbReference>
<dbReference type="PRINTS" id="PR00783">
    <property type="entry name" value="MINTRINSICP"/>
</dbReference>
<dbReference type="SUPFAM" id="SSF81338">
    <property type="entry name" value="Aquaporin-like"/>
    <property type="match status" value="1"/>
</dbReference>
<dbReference type="PROSITE" id="PS00221">
    <property type="entry name" value="MIP"/>
    <property type="match status" value="1"/>
</dbReference>
<comment type="function">
    <text evidence="2 3 4">Aquaglyceroporins form homotetrameric transmembrane channels, with each monomer independently mediating glycerol and water transport across the plasma membrane along their osmotic gradient (By similarity). Could also be permeable to urea (By similarity). Also participates in cell permeability to H2O2 and H2O2-mediated signaling (By similarity). In skin, transports glycerol to the epidermis and stratum corneum, where it maintains hydration, elasticity, and supports lipid biosynthesis for barrier repair. In kidney, contributes to the reabsorption of water, helping the body maintain proper fluid balance (By similarity).</text>
</comment>
<comment type="catalytic activity">
    <reaction evidence="4">
        <text>glycerol(in) = glycerol(out)</text>
        <dbReference type="Rhea" id="RHEA:29675"/>
        <dbReference type="ChEBI" id="CHEBI:17754"/>
    </reaction>
</comment>
<comment type="catalytic activity">
    <reaction evidence="4">
        <text>H2O(in) = H2O(out)</text>
        <dbReference type="Rhea" id="RHEA:29667"/>
        <dbReference type="ChEBI" id="CHEBI:15377"/>
    </reaction>
</comment>
<comment type="catalytic activity">
    <reaction evidence="2">
        <text>urea(in) = urea(out)</text>
        <dbReference type="Rhea" id="RHEA:32799"/>
        <dbReference type="ChEBI" id="CHEBI:16199"/>
    </reaction>
</comment>
<comment type="catalytic activity">
    <reaction evidence="4">
        <text>H2O2(out) = H2O2(in)</text>
        <dbReference type="Rhea" id="RHEA:74375"/>
        <dbReference type="ChEBI" id="CHEBI:16240"/>
    </reaction>
</comment>
<comment type="subunit">
    <text evidence="1 4">Homotetramer; each monomer provides an independent glycerol/water pore (By similarity). Could also exist in other oligomeric states (By similarity).</text>
</comment>
<comment type="subcellular location">
    <subcellularLocation>
        <location evidence="4">Cell membrane</location>
        <topology evidence="1">Multi-pass membrane protein</topology>
    </subcellularLocation>
    <subcellularLocation>
        <location evidence="2">Basolateral cell membrane</location>
        <topology evidence="1">Multi-pass membrane protein</topology>
    </subcellularLocation>
</comment>
<comment type="tissue specificity">
    <text evidence="6">Highly expressed in stomach and spleen, with lower expression in kidney and lung.</text>
</comment>
<comment type="domain">
    <text evidence="1">Aquaporins contain two tandem repeats each containing three membrane-spanning domains and a pore-forming loop with the signature motif Asn-Pro-Ala (NPA).</text>
</comment>
<comment type="similarity">
    <text evidence="8">Belongs to the MIP/aquaporin (TC 1.A.8) family.</text>
</comment>